<evidence type="ECO:0000250" key="1"/>
<evidence type="ECO:0000250" key="2">
    <source>
        <dbReference type="UniProtKB" id="P94692"/>
    </source>
</evidence>
<evidence type="ECO:0000255" key="3">
    <source>
        <dbReference type="PROSITE-ProRule" id="PRU00711"/>
    </source>
</evidence>
<evidence type="ECO:0000305" key="4"/>
<keyword id="KW-0004">4Fe-4S</keyword>
<keyword id="KW-0249">Electron transport</keyword>
<keyword id="KW-0408">Iron</keyword>
<keyword id="KW-0411">Iron-sulfur</keyword>
<keyword id="KW-0479">Metal-binding</keyword>
<keyword id="KW-0535">Nitrogen fixation</keyword>
<keyword id="KW-0560">Oxidoreductase</keyword>
<keyword id="KW-0677">Repeat</keyword>
<keyword id="KW-0813">Transport</keyword>
<organism>
    <name type="scientific">Trichormus variabilis (strain ATCC 29413 / PCC 7937)</name>
    <name type="common">Anabaena variabilis</name>
    <dbReference type="NCBI Taxonomy" id="240292"/>
    <lineage>
        <taxon>Bacteria</taxon>
        <taxon>Bacillati</taxon>
        <taxon>Cyanobacteriota</taxon>
        <taxon>Cyanophyceae</taxon>
        <taxon>Nostocales</taxon>
        <taxon>Nostocaceae</taxon>
        <taxon>Trichormus</taxon>
    </lineage>
</organism>
<protein>
    <recommendedName>
        <fullName>Pyruvate-flavodoxin oxidoreductase</fullName>
        <ecNumber>1.2.7.-</ecNumber>
    </recommendedName>
</protein>
<name>NIFJ_TRIV2</name>
<reference key="1">
    <citation type="journal article" date="2014" name="Stand. Genomic Sci.">
        <title>Complete genome sequence of Anabaena variabilis ATCC 29413.</title>
        <authorList>
            <person name="Thiel T."/>
            <person name="Pratte B.S."/>
            <person name="Zhong J."/>
            <person name="Goodwin L."/>
            <person name="Copeland A."/>
            <person name="Lucas S."/>
            <person name="Han C."/>
            <person name="Pitluck S."/>
            <person name="Land M.L."/>
            <person name="Kyrpides N.C."/>
            <person name="Woyke T."/>
        </authorList>
    </citation>
    <scope>NUCLEOTIDE SEQUENCE [LARGE SCALE GENOMIC DNA]</scope>
    <source>
        <strain>ATCC 29413 / PCC 7937</strain>
    </source>
</reference>
<reference key="2">
    <citation type="journal article" date="1993" name="Arch. Microbiol.">
        <title>Identification of the nifJ gene coding for pyruvate:ferredoxin oxidoreductase in dinitrogen-fixing cyanobacteria.</title>
        <authorList>
            <person name="Schmitz O."/>
            <person name="Kentemich T."/>
            <person name="Zimmer W."/>
            <person name="Hundeshagen B."/>
            <person name="Bothe H."/>
        </authorList>
    </citation>
    <scope>NUCLEOTIDE SEQUENCE [GENOMIC DNA] OF 9-109</scope>
</reference>
<gene>
    <name type="primary">nifJ</name>
    <name type="ordered locus">Ava_3046</name>
</gene>
<dbReference type="EC" id="1.2.7.-"/>
<dbReference type="EMBL" id="CP000117">
    <property type="protein sequence ID" value="ABA22656.1"/>
    <property type="molecule type" value="Genomic_DNA"/>
</dbReference>
<dbReference type="EMBL" id="S64520">
    <property type="protein sequence ID" value="AAB27766.2"/>
    <property type="molecule type" value="Genomic_DNA"/>
</dbReference>
<dbReference type="SMR" id="Q3M8N0"/>
<dbReference type="STRING" id="240292.Ava_3046"/>
<dbReference type="KEGG" id="ava:Ava_3046"/>
<dbReference type="eggNOG" id="COG0674">
    <property type="taxonomic scope" value="Bacteria"/>
</dbReference>
<dbReference type="eggNOG" id="COG1013">
    <property type="taxonomic scope" value="Bacteria"/>
</dbReference>
<dbReference type="eggNOG" id="COG1014">
    <property type="taxonomic scope" value="Bacteria"/>
</dbReference>
<dbReference type="eggNOG" id="COG1146">
    <property type="taxonomic scope" value="Bacteria"/>
</dbReference>
<dbReference type="HOGENOM" id="CLU_002569_0_0_3"/>
<dbReference type="Proteomes" id="UP000002533">
    <property type="component" value="Chromosome"/>
</dbReference>
<dbReference type="GO" id="GO:0051539">
    <property type="term" value="F:4 iron, 4 sulfur cluster binding"/>
    <property type="evidence" value="ECO:0007669"/>
    <property type="project" value="UniProtKB-KW"/>
</dbReference>
<dbReference type="GO" id="GO:0005506">
    <property type="term" value="F:iron ion binding"/>
    <property type="evidence" value="ECO:0007669"/>
    <property type="project" value="InterPro"/>
</dbReference>
<dbReference type="GO" id="GO:0043873">
    <property type="term" value="F:pyruvate-flavodoxin oxidoreductase activity"/>
    <property type="evidence" value="ECO:0007669"/>
    <property type="project" value="RHEA"/>
</dbReference>
<dbReference type="GO" id="GO:0030976">
    <property type="term" value="F:thiamine pyrophosphate binding"/>
    <property type="evidence" value="ECO:0007669"/>
    <property type="project" value="InterPro"/>
</dbReference>
<dbReference type="GO" id="GO:0022900">
    <property type="term" value="P:electron transport chain"/>
    <property type="evidence" value="ECO:0007669"/>
    <property type="project" value="InterPro"/>
</dbReference>
<dbReference type="GO" id="GO:0009399">
    <property type="term" value="P:nitrogen fixation"/>
    <property type="evidence" value="ECO:0007669"/>
    <property type="project" value="UniProtKB-KW"/>
</dbReference>
<dbReference type="GO" id="GO:0006979">
    <property type="term" value="P:response to oxidative stress"/>
    <property type="evidence" value="ECO:0007669"/>
    <property type="project" value="TreeGrafter"/>
</dbReference>
<dbReference type="CDD" id="cd03377">
    <property type="entry name" value="TPP_PFOR_PNO"/>
    <property type="match status" value="1"/>
</dbReference>
<dbReference type="CDD" id="cd07034">
    <property type="entry name" value="TPP_PYR_PFOR_IOR-alpha_like"/>
    <property type="match status" value="1"/>
</dbReference>
<dbReference type="FunFam" id="3.30.70.20:FF:000022">
    <property type="entry name" value="Pyruvate:ferredoxin (Flavodoxin) oxidoreductase"/>
    <property type="match status" value="1"/>
</dbReference>
<dbReference type="FunFam" id="3.40.50.920:FF:000007">
    <property type="entry name" value="Pyruvate:ferredoxin (Flavodoxin) oxidoreductase"/>
    <property type="match status" value="1"/>
</dbReference>
<dbReference type="FunFam" id="3.40.50.970:FF:000012">
    <property type="entry name" value="Pyruvate:ferredoxin (Flavodoxin) oxidoreductase"/>
    <property type="match status" value="1"/>
</dbReference>
<dbReference type="FunFam" id="3.40.50.970:FF:000041">
    <property type="entry name" value="Pyruvate:ferredoxin (Flavodoxin) oxidoreductase"/>
    <property type="match status" value="1"/>
</dbReference>
<dbReference type="FunFam" id="3.40.920.10:FF:000001">
    <property type="entry name" value="Pyruvate:ferredoxin (Flavodoxin) oxidoreductase"/>
    <property type="match status" value="1"/>
</dbReference>
<dbReference type="Gene3D" id="3.30.70.20">
    <property type="match status" value="1"/>
</dbReference>
<dbReference type="Gene3D" id="3.40.50.920">
    <property type="match status" value="1"/>
</dbReference>
<dbReference type="Gene3D" id="3.40.50.970">
    <property type="match status" value="2"/>
</dbReference>
<dbReference type="Gene3D" id="3.40.920.10">
    <property type="entry name" value="Pyruvate-ferredoxin oxidoreductase, PFOR, domain III"/>
    <property type="match status" value="1"/>
</dbReference>
<dbReference type="Gene3D" id="4.10.780.10">
    <property type="entry name" value="Pyruvate-flavodoxin oxidoreductase, EKR domain"/>
    <property type="match status" value="1"/>
</dbReference>
<dbReference type="InterPro" id="IPR017896">
    <property type="entry name" value="4Fe4S_Fe-S-bd"/>
</dbReference>
<dbReference type="InterPro" id="IPR017900">
    <property type="entry name" value="4Fe4S_Fe_S_CS"/>
</dbReference>
<dbReference type="InterPro" id="IPR033412">
    <property type="entry name" value="PFOR_II"/>
</dbReference>
<dbReference type="InterPro" id="IPR050722">
    <property type="entry name" value="Pyruvate:ferred/Flavod_OxRd"/>
</dbReference>
<dbReference type="InterPro" id="IPR037112">
    <property type="entry name" value="Pyrv-flavodox_OxR_EKR_sf"/>
</dbReference>
<dbReference type="InterPro" id="IPR019456">
    <property type="entry name" value="Pyrv-flavodox_OxRtase_EKR"/>
</dbReference>
<dbReference type="InterPro" id="IPR019752">
    <property type="entry name" value="Pyrv/ketoisovalerate_OxRed_cat"/>
</dbReference>
<dbReference type="InterPro" id="IPR002880">
    <property type="entry name" value="Pyrv_Fd/Flavodoxin_OxRdtase_N"/>
</dbReference>
<dbReference type="InterPro" id="IPR011895">
    <property type="entry name" value="Pyrv_flavodox_OxRed"/>
</dbReference>
<dbReference type="InterPro" id="IPR002869">
    <property type="entry name" value="Pyrv_flavodox_OxRed_cen"/>
</dbReference>
<dbReference type="InterPro" id="IPR029061">
    <property type="entry name" value="THDP-binding"/>
</dbReference>
<dbReference type="InterPro" id="IPR011766">
    <property type="entry name" value="TPP_enzyme_TPP-bd"/>
</dbReference>
<dbReference type="InterPro" id="IPR009014">
    <property type="entry name" value="Transketo_C/PFOR_II"/>
</dbReference>
<dbReference type="NCBIfam" id="TIGR02176">
    <property type="entry name" value="pyruv_ox_red"/>
    <property type="match status" value="1"/>
</dbReference>
<dbReference type="PANTHER" id="PTHR32154">
    <property type="entry name" value="PYRUVATE-FLAVODOXIN OXIDOREDUCTASE-RELATED"/>
    <property type="match status" value="1"/>
</dbReference>
<dbReference type="PANTHER" id="PTHR32154:SF0">
    <property type="entry name" value="PYRUVATE-FLAVODOXIN OXIDOREDUCTASE-RELATED"/>
    <property type="match status" value="1"/>
</dbReference>
<dbReference type="Pfam" id="PF10371">
    <property type="entry name" value="EKR"/>
    <property type="match status" value="1"/>
</dbReference>
<dbReference type="Pfam" id="PF12838">
    <property type="entry name" value="Fer4_7"/>
    <property type="match status" value="1"/>
</dbReference>
<dbReference type="Pfam" id="PF17147">
    <property type="entry name" value="PFOR_II"/>
    <property type="match status" value="1"/>
</dbReference>
<dbReference type="Pfam" id="PF01558">
    <property type="entry name" value="POR"/>
    <property type="match status" value="1"/>
</dbReference>
<dbReference type="Pfam" id="PF01855">
    <property type="entry name" value="POR_N"/>
    <property type="match status" value="1"/>
</dbReference>
<dbReference type="Pfam" id="PF02775">
    <property type="entry name" value="TPP_enzyme_C"/>
    <property type="match status" value="1"/>
</dbReference>
<dbReference type="PIRSF" id="PIRSF000159">
    <property type="entry name" value="NifJ"/>
    <property type="match status" value="1"/>
</dbReference>
<dbReference type="SMART" id="SM00890">
    <property type="entry name" value="EKR"/>
    <property type="match status" value="1"/>
</dbReference>
<dbReference type="SUPFAM" id="SSF54862">
    <property type="entry name" value="4Fe-4S ferredoxins"/>
    <property type="match status" value="1"/>
</dbReference>
<dbReference type="SUPFAM" id="SSF53323">
    <property type="entry name" value="Pyruvate-ferredoxin oxidoreductase, PFOR, domain III"/>
    <property type="match status" value="1"/>
</dbReference>
<dbReference type="SUPFAM" id="SSF52518">
    <property type="entry name" value="Thiamin diphosphate-binding fold (THDP-binding)"/>
    <property type="match status" value="2"/>
</dbReference>
<dbReference type="SUPFAM" id="SSF52922">
    <property type="entry name" value="TK C-terminal domain-like"/>
    <property type="match status" value="1"/>
</dbReference>
<dbReference type="PROSITE" id="PS00198">
    <property type="entry name" value="4FE4S_FER_1"/>
    <property type="match status" value="2"/>
</dbReference>
<dbReference type="PROSITE" id="PS51379">
    <property type="entry name" value="4FE4S_FER_2"/>
    <property type="match status" value="2"/>
</dbReference>
<comment type="function">
    <text evidence="1">Oxidoreductase required for the transfer of electrons from pyruvate to flavodoxin, which reduces nitrogenase.</text>
</comment>
<comment type="catalytic activity">
    <reaction>
        <text>oxidized [flavodoxin] + pyruvate + CoA + 2 H(+) = reduced [flavodoxin] + acetyl-CoA + CO2</text>
        <dbReference type="Rhea" id="RHEA:44140"/>
        <dbReference type="Rhea" id="RHEA-COMP:10622"/>
        <dbReference type="Rhea" id="RHEA-COMP:10623"/>
        <dbReference type="ChEBI" id="CHEBI:15361"/>
        <dbReference type="ChEBI" id="CHEBI:15378"/>
        <dbReference type="ChEBI" id="CHEBI:16526"/>
        <dbReference type="ChEBI" id="CHEBI:57287"/>
        <dbReference type="ChEBI" id="CHEBI:57288"/>
        <dbReference type="ChEBI" id="CHEBI:57618"/>
        <dbReference type="ChEBI" id="CHEBI:58210"/>
    </reaction>
</comment>
<comment type="cofactor">
    <cofactor evidence="2">
        <name>[4Fe-4S] cluster</name>
        <dbReference type="ChEBI" id="CHEBI:49883"/>
    </cofactor>
    <text evidence="2">Binds 3 [4Fe-4S] clusters per subunit.</text>
</comment>
<comment type="similarity">
    <text evidence="4">Belongs to the pyruvate:ferredoxin/flavodoxin oxidoreductase family.</text>
</comment>
<accession>Q3M8N0</accession>
<accession>Q53349</accession>
<proteinExistence type="inferred from homology"/>
<sequence length="1190" mass="131530">MKNRTFATIDGNEAVAQVVYQINEVIAIYPITPSSPMAEWSDAWASEGKPNIWGTVPTVVQMQSEGGVAGAVHGALQTGSLTTTFTASQGLLLMIPNMYKIAGELTPTVFHIAARSLAAQALSIFGDHSDVMATRGTGFAMLCAASVQEAHDFALISTRITLESRIPFLHFFDGFRTSHEINKIELLTTEDFKGFIPNELVIAHRSRALTPDKPVLRGTAQNPDVYFQARETVNPYYLACPEITQKVMDEFAQMTGRQYQLFEYHGDPTAERVIILMGSGCETVHETVDYLNALGEKVGVIKVRLYQPFDSQRFIAALPTTTRGIAVLDRTKEPGASGEPLYLDVVTALYEKWGVGSLPTVIGGRYGLSSKEFTPGMVKAVFDNLAATIPKNHFTIGINDDVSHTSLDYDPDFNIEPDNIVRAIFYGLGADGTVGANKNSIKIIGEETNNYAQGYFVYDSKKSGSVTVSHLRFGSQLIRSTYLINKASFVACHQWDFLEKFPILKDIVQGGTFLLNSPYDQDEVWERLPGKIQAQIQQKQLKVYVINAYKVAREAGMAGRINTVMQVCFFALSNVLPREEAIAEIKKYIRKTYGKKGDQIVQMNIKAVDTTLDNLHELVTREYSAPPQIPNHHYPLSPEGAPPSSIPYILGKMIAREGDELPVSALPNDGTYPTGTAKWEKRNIAQEIPVWDTDVCIQCGKCVMVCPHSVIRSKVYEPEQLENAPSTFKSANAKDHDWHGLKFTIQVAAEDCTGCGICVDVCPAKNKAQPRKKAINMEPQLPLRQAERENWDFFLSIPNPDRRELKLTHINQQQMQEPLFEFSGACAGCGETPYIKLGTQLFGDRMIVANATGCSSIYGGNLPTTPWTQNAAGRGPAWSNSLFEDNAEFGLGFRVSIDKQTEIASQLLQELATVVGRELVDDILNNQQNNEAEIWEQRDRISILKQKLQALVNPELTSKAQLLLSLADYLVKKSVWIIGGDGWAYDIGYGGLDHVLASGRNVNILVLDTEVYSNTGGQMSKATPKGAVAKFASGGKPAAKKDLGLMAMTYGNVYVASVAMGAKDEHTLKAFLEAEAYSGTSLIIAYSHCIAHGINLSTAMQNQKAAVDSGRWLLYRYHPDLVKQGKNPLQLDSRTPKLPLEESMYLENRFKMLTKINPEVAKELLKEAQTDVNLRWQMYQYLAAREVTQG</sequence>
<feature type="chain" id="PRO_0000215553" description="Pyruvate-flavodoxin oxidoreductase">
    <location>
        <begin position="1"/>
        <end position="1190"/>
    </location>
</feature>
<feature type="domain" description="4Fe-4S ferredoxin-type 1" evidence="3">
    <location>
        <begin position="687"/>
        <end position="716"/>
    </location>
</feature>
<feature type="domain" description="4Fe-4S ferredoxin-type 2" evidence="3">
    <location>
        <begin position="743"/>
        <end position="773"/>
    </location>
</feature>
<feature type="binding site" evidence="2">
    <location>
        <position position="696"/>
    </location>
    <ligand>
        <name>[4Fe-4S] cluster</name>
        <dbReference type="ChEBI" id="CHEBI:49883"/>
        <label>1</label>
    </ligand>
</feature>
<feature type="binding site" evidence="2">
    <location>
        <position position="699"/>
    </location>
    <ligand>
        <name>[4Fe-4S] cluster</name>
        <dbReference type="ChEBI" id="CHEBI:49883"/>
        <label>1</label>
    </ligand>
</feature>
<feature type="binding site" evidence="2">
    <location>
        <position position="702"/>
    </location>
    <ligand>
        <name>[4Fe-4S] cluster</name>
        <dbReference type="ChEBI" id="CHEBI:49883"/>
        <label>1</label>
    </ligand>
</feature>
<feature type="binding site" evidence="2">
    <location>
        <position position="706"/>
    </location>
    <ligand>
        <name>[4Fe-4S] cluster</name>
        <dbReference type="ChEBI" id="CHEBI:49883"/>
        <label>2</label>
    </ligand>
</feature>
<feature type="binding site" evidence="2">
    <location>
        <position position="752"/>
    </location>
    <ligand>
        <name>[4Fe-4S] cluster</name>
        <dbReference type="ChEBI" id="CHEBI:49883"/>
        <label>2</label>
    </ligand>
</feature>
<feature type="binding site" evidence="2">
    <location>
        <position position="755"/>
    </location>
    <ligand>
        <name>[4Fe-4S] cluster</name>
        <dbReference type="ChEBI" id="CHEBI:49883"/>
        <label>2</label>
    </ligand>
</feature>
<feature type="binding site" evidence="2">
    <location>
        <position position="758"/>
    </location>
    <ligand>
        <name>[4Fe-4S] cluster</name>
        <dbReference type="ChEBI" id="CHEBI:49883"/>
        <label>2</label>
    </ligand>
</feature>
<feature type="binding site" evidence="2">
    <location>
        <position position="762"/>
    </location>
    <ligand>
        <name>[4Fe-4S] cluster</name>
        <dbReference type="ChEBI" id="CHEBI:49883"/>
        <label>1</label>
    </ligand>
</feature>
<feature type="binding site" evidence="2">
    <location>
        <position position="826"/>
    </location>
    <ligand>
        <name>[4Fe-4S] cluster</name>
        <dbReference type="ChEBI" id="CHEBI:49883"/>
        <label>3</label>
    </ligand>
</feature>
<feature type="binding site" evidence="2">
    <location>
        <position position="829"/>
    </location>
    <ligand>
        <name>[4Fe-4S] cluster</name>
        <dbReference type="ChEBI" id="CHEBI:49883"/>
        <label>3</label>
    </ligand>
</feature>
<feature type="binding site" evidence="2">
    <location>
        <position position="854"/>
    </location>
    <ligand>
        <name>[4Fe-4S] cluster</name>
        <dbReference type="ChEBI" id="CHEBI:49883"/>
        <label>3</label>
    </ligand>
</feature>
<feature type="binding site" evidence="2">
    <location>
        <position position="1089"/>
    </location>
    <ligand>
        <name>[4Fe-4S] cluster</name>
        <dbReference type="ChEBI" id="CHEBI:49883"/>
        <label>3</label>
    </ligand>
</feature>
<feature type="sequence conflict" description="In Ref. 2." evidence="4" ref="2">
    <original>IAGELTPTV</original>
    <variation>VARVQPPTT</variation>
    <location>
        <begin position="101"/>
        <end position="109"/>
    </location>
</feature>